<proteinExistence type="evidence at transcript level"/>
<feature type="chain" id="PRO_0000150490" description="Olfactory receptor 2L13">
    <location>
        <begin position="1"/>
        <end position="312"/>
    </location>
</feature>
<feature type="topological domain" description="Extracellular" evidence="1">
    <location>
        <begin position="1"/>
        <end position="24"/>
    </location>
</feature>
<feature type="transmembrane region" description="Helical; Name=1" evidence="1">
    <location>
        <begin position="25"/>
        <end position="48"/>
    </location>
</feature>
<feature type="topological domain" description="Cytoplasmic" evidence="1">
    <location>
        <begin position="49"/>
        <end position="56"/>
    </location>
</feature>
<feature type="transmembrane region" description="Helical; Name=2" evidence="1">
    <location>
        <begin position="57"/>
        <end position="78"/>
    </location>
</feature>
<feature type="topological domain" description="Extracellular" evidence="1">
    <location>
        <begin position="79"/>
        <end position="99"/>
    </location>
</feature>
<feature type="transmembrane region" description="Helical; Name=3" evidence="1">
    <location>
        <begin position="100"/>
        <end position="119"/>
    </location>
</feature>
<feature type="topological domain" description="Cytoplasmic" evidence="1">
    <location>
        <begin position="120"/>
        <end position="138"/>
    </location>
</feature>
<feature type="transmembrane region" description="Helical; Name=4" evidence="1">
    <location>
        <begin position="139"/>
        <end position="157"/>
    </location>
</feature>
<feature type="topological domain" description="Extracellular" evidence="1">
    <location>
        <begin position="158"/>
        <end position="194"/>
    </location>
</feature>
<feature type="transmembrane region" description="Helical; Name=5" evidence="1">
    <location>
        <begin position="195"/>
        <end position="218"/>
    </location>
</feature>
<feature type="topological domain" description="Cytoplasmic" evidence="1">
    <location>
        <begin position="219"/>
        <end position="235"/>
    </location>
</feature>
<feature type="transmembrane region" description="Helical; Name=6" evidence="1">
    <location>
        <begin position="236"/>
        <end position="258"/>
    </location>
</feature>
<feature type="topological domain" description="Extracellular" evidence="1">
    <location>
        <begin position="259"/>
        <end position="271"/>
    </location>
</feature>
<feature type="transmembrane region" description="Helical; Name=7" evidence="1">
    <location>
        <begin position="272"/>
        <end position="291"/>
    </location>
</feature>
<feature type="topological domain" description="Cytoplasmic" evidence="1">
    <location>
        <begin position="292"/>
        <end position="312"/>
    </location>
</feature>
<feature type="glycosylation site" description="N-linked (GlcNAc...) asparagine" evidence="1">
    <location>
        <position position="5"/>
    </location>
</feature>
<feature type="glycosylation site" description="N-linked (GlcNAc...) asparagine" evidence="1">
    <location>
        <position position="20"/>
    </location>
</feature>
<feature type="disulfide bond" evidence="2">
    <location>
        <begin position="96"/>
        <end position="188"/>
    </location>
</feature>
<feature type="sequence variant" id="VAR_053148" description="In dbSNP:rs12742561.">
    <original>L</original>
    <variation>F</variation>
    <location>
        <position position="156"/>
    </location>
</feature>
<feature type="sequence variant" id="VAR_062025" description="In dbSNP:rs45577033.">
    <original>R</original>
    <variation>H</variation>
    <location>
        <position position="265"/>
    </location>
</feature>
<organism>
    <name type="scientific">Homo sapiens</name>
    <name type="common">Human</name>
    <dbReference type="NCBI Taxonomy" id="9606"/>
    <lineage>
        <taxon>Eukaryota</taxon>
        <taxon>Metazoa</taxon>
        <taxon>Chordata</taxon>
        <taxon>Craniata</taxon>
        <taxon>Vertebrata</taxon>
        <taxon>Euteleostomi</taxon>
        <taxon>Mammalia</taxon>
        <taxon>Eutheria</taxon>
        <taxon>Euarchontoglires</taxon>
        <taxon>Primates</taxon>
        <taxon>Haplorrhini</taxon>
        <taxon>Catarrhini</taxon>
        <taxon>Hominidae</taxon>
        <taxon>Homo</taxon>
    </lineage>
</organism>
<dbReference type="EMBL" id="AL513488">
    <property type="status" value="NOT_ANNOTATED_CDS"/>
    <property type="molecule type" value="Genomic_DNA"/>
</dbReference>
<dbReference type="EMBL" id="BC028158">
    <property type="protein sequence ID" value="AAH28158.1"/>
    <property type="molecule type" value="mRNA"/>
</dbReference>
<dbReference type="CCDS" id="CCDS1637.1"/>
<dbReference type="RefSeq" id="NP_001291464.1">
    <property type="nucleotide sequence ID" value="NM_001304535.3"/>
</dbReference>
<dbReference type="RefSeq" id="NP_001382865.1">
    <property type="nucleotide sequence ID" value="NM_001395936.1"/>
</dbReference>
<dbReference type="RefSeq" id="NP_787107.1">
    <property type="nucleotide sequence ID" value="NM_175911.5"/>
</dbReference>
<dbReference type="RefSeq" id="XP_011542471.1">
    <property type="nucleotide sequence ID" value="XM_011544169.3"/>
</dbReference>
<dbReference type="RefSeq" id="XP_054192083.1">
    <property type="nucleotide sequence ID" value="XM_054336108.1"/>
</dbReference>
<dbReference type="SMR" id="Q8N349"/>
<dbReference type="BioGRID" id="129891">
    <property type="interactions" value="7"/>
</dbReference>
<dbReference type="FunCoup" id="Q8N349">
    <property type="interactions" value="449"/>
</dbReference>
<dbReference type="IntAct" id="Q8N349">
    <property type="interactions" value="5"/>
</dbReference>
<dbReference type="STRING" id="9606.ENSP00000493075"/>
<dbReference type="GlyCosmos" id="Q8N349">
    <property type="glycosylation" value="2 sites, No reported glycans"/>
</dbReference>
<dbReference type="GlyGen" id="Q8N349">
    <property type="glycosylation" value="2 sites"/>
</dbReference>
<dbReference type="PhosphoSitePlus" id="Q8N349"/>
<dbReference type="BioMuta" id="OR2L13"/>
<dbReference type="DMDM" id="38372494"/>
<dbReference type="MassIVE" id="Q8N349"/>
<dbReference type="PaxDb" id="9606-ENSP00000355434"/>
<dbReference type="ProteomicsDB" id="71763"/>
<dbReference type="Antibodypedia" id="65612">
    <property type="antibodies" value="90 antibodies from 19 providers"/>
</dbReference>
<dbReference type="DNASU" id="284521"/>
<dbReference type="Ensembl" id="ENST00000358120.4">
    <property type="protein sequence ID" value="ENSP00000350836.2"/>
    <property type="gene ID" value="ENSG00000196071.6"/>
</dbReference>
<dbReference type="Ensembl" id="ENST00000641714.1">
    <property type="protein sequence ID" value="ENSP00000493075.1"/>
    <property type="gene ID" value="ENSG00000196071.6"/>
</dbReference>
<dbReference type="Ensembl" id="ENST00000641893.1">
    <property type="protein sequence ID" value="ENSP00000492949.1"/>
    <property type="gene ID" value="ENSG00000196071.6"/>
</dbReference>
<dbReference type="GeneID" id="284521"/>
<dbReference type="KEGG" id="hsa:284521"/>
<dbReference type="MANE-Select" id="ENST00000358120.4">
    <property type="protein sequence ID" value="ENSP00000350836.2"/>
    <property type="RefSeq nucleotide sequence ID" value="NM_001395936.1"/>
    <property type="RefSeq protein sequence ID" value="NP_001382865.1"/>
</dbReference>
<dbReference type="UCSC" id="uc001ids.4">
    <property type="organism name" value="human"/>
</dbReference>
<dbReference type="AGR" id="HGNC:19578"/>
<dbReference type="CTD" id="284521"/>
<dbReference type="DisGeNET" id="284521"/>
<dbReference type="GeneCards" id="OR2L13"/>
<dbReference type="HGNC" id="HGNC:19578">
    <property type="gene designation" value="OR2L13"/>
</dbReference>
<dbReference type="HPA" id="ENSG00000196071">
    <property type="expression patterns" value="Group enriched (brain, retina)"/>
</dbReference>
<dbReference type="neXtProt" id="NX_Q8N349"/>
<dbReference type="OpenTargets" id="ENSG00000196071"/>
<dbReference type="PharmGKB" id="PA134982185"/>
<dbReference type="VEuPathDB" id="HostDB:ENSG00000196071"/>
<dbReference type="eggNOG" id="ENOG502RTYI">
    <property type="taxonomic scope" value="Eukaryota"/>
</dbReference>
<dbReference type="GeneTree" id="ENSGT01130000278325"/>
<dbReference type="HOGENOM" id="CLU_012526_0_1_1"/>
<dbReference type="InParanoid" id="Q8N349"/>
<dbReference type="OMA" id="TVPNMAF"/>
<dbReference type="OrthoDB" id="9441485at2759"/>
<dbReference type="PAN-GO" id="Q8N349">
    <property type="GO annotations" value="0 GO annotations based on evolutionary models"/>
</dbReference>
<dbReference type="PhylomeDB" id="Q8N349"/>
<dbReference type="TreeFam" id="TF337295"/>
<dbReference type="PathwayCommons" id="Q8N349"/>
<dbReference type="Reactome" id="R-HSA-381753">
    <property type="pathway name" value="Olfactory Signaling Pathway"/>
</dbReference>
<dbReference type="Reactome" id="R-HSA-9752946">
    <property type="pathway name" value="Expression and translocation of olfactory receptors"/>
</dbReference>
<dbReference type="BioGRID-ORCS" id="284521">
    <property type="hits" value="7 hits in 747 CRISPR screens"/>
</dbReference>
<dbReference type="ChiTaRS" id="OR2L13">
    <property type="organism name" value="human"/>
</dbReference>
<dbReference type="GeneWiki" id="OR2L13"/>
<dbReference type="GenomeRNAi" id="284521"/>
<dbReference type="Pharos" id="Q8N349">
    <property type="development level" value="Tdark"/>
</dbReference>
<dbReference type="PRO" id="PR:Q8N349"/>
<dbReference type="Proteomes" id="UP000005640">
    <property type="component" value="Chromosome 1"/>
</dbReference>
<dbReference type="RNAct" id="Q8N349">
    <property type="molecule type" value="protein"/>
</dbReference>
<dbReference type="Bgee" id="ENSG00000196071">
    <property type="expression patterns" value="Expressed in prefrontal cortex and 52 other cell types or tissues"/>
</dbReference>
<dbReference type="ExpressionAtlas" id="Q8N349">
    <property type="expression patterns" value="baseline and differential"/>
</dbReference>
<dbReference type="GO" id="GO:0005886">
    <property type="term" value="C:plasma membrane"/>
    <property type="evidence" value="ECO:0000318"/>
    <property type="project" value="GO_Central"/>
</dbReference>
<dbReference type="GO" id="GO:0004930">
    <property type="term" value="F:G protein-coupled receptor activity"/>
    <property type="evidence" value="ECO:0007669"/>
    <property type="project" value="UniProtKB-KW"/>
</dbReference>
<dbReference type="GO" id="GO:0004984">
    <property type="term" value="F:olfactory receptor activity"/>
    <property type="evidence" value="ECO:0000318"/>
    <property type="project" value="GO_Central"/>
</dbReference>
<dbReference type="GO" id="GO:0050911">
    <property type="term" value="P:detection of chemical stimulus involved in sensory perception of smell"/>
    <property type="evidence" value="ECO:0000318"/>
    <property type="project" value="GO_Central"/>
</dbReference>
<dbReference type="CDD" id="cd15421">
    <property type="entry name" value="7tmA_OR2T-like"/>
    <property type="match status" value="1"/>
</dbReference>
<dbReference type="FunFam" id="1.10.1220.70:FF:000001">
    <property type="entry name" value="Olfactory receptor"/>
    <property type="match status" value="1"/>
</dbReference>
<dbReference type="FunFam" id="1.20.1070.10:FF:000008">
    <property type="entry name" value="Olfactory receptor"/>
    <property type="match status" value="1"/>
</dbReference>
<dbReference type="Gene3D" id="1.20.1070.10">
    <property type="entry name" value="Rhodopsin 7-helix transmembrane proteins"/>
    <property type="match status" value="1"/>
</dbReference>
<dbReference type="InterPro" id="IPR000276">
    <property type="entry name" value="GPCR_Rhodpsn"/>
</dbReference>
<dbReference type="InterPro" id="IPR017452">
    <property type="entry name" value="GPCR_Rhodpsn_7TM"/>
</dbReference>
<dbReference type="InterPro" id="IPR000725">
    <property type="entry name" value="Olfact_rcpt"/>
</dbReference>
<dbReference type="PANTHER" id="PTHR26453">
    <property type="entry name" value="OLFACTORY RECEPTOR"/>
    <property type="match status" value="1"/>
</dbReference>
<dbReference type="Pfam" id="PF13853">
    <property type="entry name" value="7tm_4"/>
    <property type="match status" value="1"/>
</dbReference>
<dbReference type="PRINTS" id="PR00237">
    <property type="entry name" value="GPCRRHODOPSN"/>
</dbReference>
<dbReference type="PRINTS" id="PR00245">
    <property type="entry name" value="OLFACTORYR"/>
</dbReference>
<dbReference type="SUPFAM" id="SSF81321">
    <property type="entry name" value="Family A G protein-coupled receptor-like"/>
    <property type="match status" value="1"/>
</dbReference>
<dbReference type="PROSITE" id="PS00237">
    <property type="entry name" value="G_PROTEIN_RECEP_F1_1"/>
    <property type="match status" value="1"/>
</dbReference>
<dbReference type="PROSITE" id="PS50262">
    <property type="entry name" value="G_PROTEIN_RECEP_F1_2"/>
    <property type="match status" value="1"/>
</dbReference>
<accession>Q8N349</accession>
<accession>Q5VUR5</accession>
<reference key="1">
    <citation type="journal article" date="2006" name="Nature">
        <title>The DNA sequence and biological annotation of human chromosome 1.</title>
        <authorList>
            <person name="Gregory S.G."/>
            <person name="Barlow K.F."/>
            <person name="McLay K.E."/>
            <person name="Kaul R."/>
            <person name="Swarbreck D."/>
            <person name="Dunham A."/>
            <person name="Scott C.E."/>
            <person name="Howe K.L."/>
            <person name="Woodfine K."/>
            <person name="Spencer C.C.A."/>
            <person name="Jones M.C."/>
            <person name="Gillson C."/>
            <person name="Searle S."/>
            <person name="Zhou Y."/>
            <person name="Kokocinski F."/>
            <person name="McDonald L."/>
            <person name="Evans R."/>
            <person name="Phillips K."/>
            <person name="Atkinson A."/>
            <person name="Cooper R."/>
            <person name="Jones C."/>
            <person name="Hall R.E."/>
            <person name="Andrews T.D."/>
            <person name="Lloyd C."/>
            <person name="Ainscough R."/>
            <person name="Almeida J.P."/>
            <person name="Ambrose K.D."/>
            <person name="Anderson F."/>
            <person name="Andrew R.W."/>
            <person name="Ashwell R.I.S."/>
            <person name="Aubin K."/>
            <person name="Babbage A.K."/>
            <person name="Bagguley C.L."/>
            <person name="Bailey J."/>
            <person name="Beasley H."/>
            <person name="Bethel G."/>
            <person name="Bird C.P."/>
            <person name="Bray-Allen S."/>
            <person name="Brown J.Y."/>
            <person name="Brown A.J."/>
            <person name="Buckley D."/>
            <person name="Burton J."/>
            <person name="Bye J."/>
            <person name="Carder C."/>
            <person name="Chapman J.C."/>
            <person name="Clark S.Y."/>
            <person name="Clarke G."/>
            <person name="Clee C."/>
            <person name="Cobley V."/>
            <person name="Collier R.E."/>
            <person name="Corby N."/>
            <person name="Coville G.J."/>
            <person name="Davies J."/>
            <person name="Deadman R."/>
            <person name="Dunn M."/>
            <person name="Earthrowl M."/>
            <person name="Ellington A.G."/>
            <person name="Errington H."/>
            <person name="Frankish A."/>
            <person name="Frankland J."/>
            <person name="French L."/>
            <person name="Garner P."/>
            <person name="Garnett J."/>
            <person name="Gay L."/>
            <person name="Ghori M.R.J."/>
            <person name="Gibson R."/>
            <person name="Gilby L.M."/>
            <person name="Gillett W."/>
            <person name="Glithero R.J."/>
            <person name="Grafham D.V."/>
            <person name="Griffiths C."/>
            <person name="Griffiths-Jones S."/>
            <person name="Grocock R."/>
            <person name="Hammond S."/>
            <person name="Harrison E.S.I."/>
            <person name="Hart E."/>
            <person name="Haugen E."/>
            <person name="Heath P.D."/>
            <person name="Holmes S."/>
            <person name="Holt K."/>
            <person name="Howden P.J."/>
            <person name="Hunt A.R."/>
            <person name="Hunt S.E."/>
            <person name="Hunter G."/>
            <person name="Isherwood J."/>
            <person name="James R."/>
            <person name="Johnson C."/>
            <person name="Johnson D."/>
            <person name="Joy A."/>
            <person name="Kay M."/>
            <person name="Kershaw J.K."/>
            <person name="Kibukawa M."/>
            <person name="Kimberley A.M."/>
            <person name="King A."/>
            <person name="Knights A.J."/>
            <person name="Lad H."/>
            <person name="Laird G."/>
            <person name="Lawlor S."/>
            <person name="Leongamornlert D.A."/>
            <person name="Lloyd D.M."/>
            <person name="Loveland J."/>
            <person name="Lovell J."/>
            <person name="Lush M.J."/>
            <person name="Lyne R."/>
            <person name="Martin S."/>
            <person name="Mashreghi-Mohammadi M."/>
            <person name="Matthews L."/>
            <person name="Matthews N.S.W."/>
            <person name="McLaren S."/>
            <person name="Milne S."/>
            <person name="Mistry S."/>
            <person name="Moore M.J.F."/>
            <person name="Nickerson T."/>
            <person name="O'Dell C.N."/>
            <person name="Oliver K."/>
            <person name="Palmeiri A."/>
            <person name="Palmer S.A."/>
            <person name="Parker A."/>
            <person name="Patel D."/>
            <person name="Pearce A.V."/>
            <person name="Peck A.I."/>
            <person name="Pelan S."/>
            <person name="Phelps K."/>
            <person name="Phillimore B.J."/>
            <person name="Plumb R."/>
            <person name="Rajan J."/>
            <person name="Raymond C."/>
            <person name="Rouse G."/>
            <person name="Saenphimmachak C."/>
            <person name="Sehra H.K."/>
            <person name="Sheridan E."/>
            <person name="Shownkeen R."/>
            <person name="Sims S."/>
            <person name="Skuce C.D."/>
            <person name="Smith M."/>
            <person name="Steward C."/>
            <person name="Subramanian S."/>
            <person name="Sycamore N."/>
            <person name="Tracey A."/>
            <person name="Tromans A."/>
            <person name="Van Helmond Z."/>
            <person name="Wall M."/>
            <person name="Wallis J.M."/>
            <person name="White S."/>
            <person name="Whitehead S.L."/>
            <person name="Wilkinson J.E."/>
            <person name="Willey D.L."/>
            <person name="Williams H."/>
            <person name="Wilming L."/>
            <person name="Wray P.W."/>
            <person name="Wu Z."/>
            <person name="Coulson A."/>
            <person name="Vaudin M."/>
            <person name="Sulston J.E."/>
            <person name="Durbin R.M."/>
            <person name="Hubbard T."/>
            <person name="Wooster R."/>
            <person name="Dunham I."/>
            <person name="Carter N.P."/>
            <person name="McVean G."/>
            <person name="Ross M.T."/>
            <person name="Harrow J."/>
            <person name="Olson M.V."/>
            <person name="Beck S."/>
            <person name="Rogers J."/>
            <person name="Bentley D.R."/>
        </authorList>
    </citation>
    <scope>NUCLEOTIDE SEQUENCE [LARGE SCALE GENOMIC DNA]</scope>
</reference>
<reference key="2">
    <citation type="journal article" date="2004" name="Genome Res.">
        <title>The status, quality, and expansion of the NIH full-length cDNA project: the Mammalian Gene Collection (MGC).</title>
        <authorList>
            <consortium name="The MGC Project Team"/>
        </authorList>
    </citation>
    <scope>NUCLEOTIDE SEQUENCE [LARGE SCALE MRNA]</scope>
    <source>
        <tissue>Brain</tissue>
    </source>
</reference>
<keyword id="KW-1003">Cell membrane</keyword>
<keyword id="KW-1015">Disulfide bond</keyword>
<keyword id="KW-0297">G-protein coupled receptor</keyword>
<keyword id="KW-0325">Glycoprotein</keyword>
<keyword id="KW-0472">Membrane</keyword>
<keyword id="KW-0552">Olfaction</keyword>
<keyword id="KW-0675">Receptor</keyword>
<keyword id="KW-1185">Reference proteome</keyword>
<keyword id="KW-0716">Sensory transduction</keyword>
<keyword id="KW-0807">Transducer</keyword>
<keyword id="KW-0812">Transmembrane</keyword>
<keyword id="KW-1133">Transmembrane helix</keyword>
<evidence type="ECO:0000255" key="1"/>
<evidence type="ECO:0000255" key="2">
    <source>
        <dbReference type="PROSITE-ProRule" id="PRU00521"/>
    </source>
</evidence>
<evidence type="ECO:0000305" key="3"/>
<comment type="function">
    <text evidence="3">Odorant receptor.</text>
</comment>
<comment type="subcellular location">
    <subcellularLocation>
        <location>Cell membrane</location>
        <topology>Multi-pass membrane protein</topology>
    </subcellularLocation>
</comment>
<comment type="similarity">
    <text evidence="2">Belongs to the G-protein coupled receptor 1 family.</text>
</comment>
<comment type="online information" name="Human Olfactory Receptor Data Exploratorium (HORDE)">
    <link uri="http://genome.weizmann.ac.il/horde/card/index/symbol:OR2L13"/>
</comment>
<gene>
    <name type="primary">OR2L13</name>
    <name type="synonym">OR2L14</name>
</gene>
<sequence>MEKWNHTSNDFILLGLLPPNQTGIFLLCLIILIFFLASVGNSAMIHLIHVDPRLHTPMYFLLSQLSLMDLMYISTTVPKMAYNFLSGQKGISFLGCGVQSFFFLTMACSEGLLLTSMAYDRYLAICHSLYYPIRMSKMMCVKMIGGSWTLGSINSLAHTVFALHIPYCRSRAIDHFFCDVPAMLLLACTDTWVYEYMVFVSTSLFLLFPFIGITSSCGRVLFAVYHMHSKEGRKKAFTTISTHLTVVIFYYAPFVYTYLRPRNLRSPAEDKILAVFYTILTPMLNPIIYSLRNKEVLGAMRRVFGIFSFLKE</sequence>
<protein>
    <recommendedName>
        <fullName>Olfactory receptor 2L13</fullName>
    </recommendedName>
    <alternativeName>
        <fullName>Olfactory receptor 2L14</fullName>
    </alternativeName>
</protein>
<name>OR2LD_HUMAN</name>